<organism>
    <name type="scientific">Kluyveromyces lactis (strain ATCC 8585 / CBS 2359 / DSM 70799 / NBRC 1267 / NRRL Y-1140 / WM37)</name>
    <name type="common">Yeast</name>
    <name type="synonym">Candida sphaerica</name>
    <dbReference type="NCBI Taxonomy" id="284590"/>
    <lineage>
        <taxon>Eukaryota</taxon>
        <taxon>Fungi</taxon>
        <taxon>Dikarya</taxon>
        <taxon>Ascomycota</taxon>
        <taxon>Saccharomycotina</taxon>
        <taxon>Saccharomycetes</taxon>
        <taxon>Saccharomycetales</taxon>
        <taxon>Saccharomycetaceae</taxon>
        <taxon>Kluyveromyces</taxon>
    </lineage>
</organism>
<dbReference type="EC" id="3.4.16.6"/>
<dbReference type="EMBL" id="CR382126">
    <property type="protein sequence ID" value="CAG98243.1"/>
    <property type="molecule type" value="Genomic_DNA"/>
</dbReference>
<dbReference type="RefSeq" id="XP_455535.1">
    <property type="nucleotide sequence ID" value="XM_455535.1"/>
</dbReference>
<dbReference type="SMR" id="Q6CKK4"/>
<dbReference type="FunCoup" id="Q6CKK4">
    <property type="interactions" value="124"/>
</dbReference>
<dbReference type="STRING" id="284590.Q6CKK4"/>
<dbReference type="ESTHER" id="klula-q6ckk4">
    <property type="family name" value="Carboxypeptidase_S10"/>
</dbReference>
<dbReference type="MEROPS" id="S10.007"/>
<dbReference type="GlyCosmos" id="Q6CKK4">
    <property type="glycosylation" value="4 sites, No reported glycans"/>
</dbReference>
<dbReference type="PaxDb" id="284590-Q6CKK4"/>
<dbReference type="KEGG" id="kla:KLLA0_F09999g"/>
<dbReference type="eggNOG" id="KOG1282">
    <property type="taxonomic scope" value="Eukaryota"/>
</dbReference>
<dbReference type="HOGENOM" id="CLU_008523_11_2_1"/>
<dbReference type="InParanoid" id="Q6CKK4"/>
<dbReference type="OMA" id="NAHENCQ"/>
<dbReference type="Proteomes" id="UP000000598">
    <property type="component" value="Chromosome F"/>
</dbReference>
<dbReference type="GO" id="GO:0016020">
    <property type="term" value="C:membrane"/>
    <property type="evidence" value="ECO:0007669"/>
    <property type="project" value="UniProtKB-KW"/>
</dbReference>
<dbReference type="GO" id="GO:0005802">
    <property type="term" value="C:trans-Golgi network"/>
    <property type="evidence" value="ECO:0007669"/>
    <property type="project" value="TreeGrafter"/>
</dbReference>
<dbReference type="GO" id="GO:0004185">
    <property type="term" value="F:serine-type carboxypeptidase activity"/>
    <property type="evidence" value="ECO:0007669"/>
    <property type="project" value="UniProtKB-EC"/>
</dbReference>
<dbReference type="GO" id="GO:0006915">
    <property type="term" value="P:apoptotic process"/>
    <property type="evidence" value="ECO:0007669"/>
    <property type="project" value="UniProtKB-KW"/>
</dbReference>
<dbReference type="GO" id="GO:0006508">
    <property type="term" value="P:proteolysis"/>
    <property type="evidence" value="ECO:0007669"/>
    <property type="project" value="UniProtKB-KW"/>
</dbReference>
<dbReference type="Gene3D" id="3.40.50.1820">
    <property type="entry name" value="alpha/beta hydrolase"/>
    <property type="match status" value="1"/>
</dbReference>
<dbReference type="InterPro" id="IPR029058">
    <property type="entry name" value="AB_hydrolase_fold"/>
</dbReference>
<dbReference type="InterPro" id="IPR001563">
    <property type="entry name" value="Peptidase_S10"/>
</dbReference>
<dbReference type="InterPro" id="IPR033124">
    <property type="entry name" value="Ser_caboxypep_his_AS"/>
</dbReference>
<dbReference type="InterPro" id="IPR018202">
    <property type="entry name" value="Ser_caboxypep_ser_AS"/>
</dbReference>
<dbReference type="PANTHER" id="PTHR11802:SF190">
    <property type="entry name" value="PHEROMONE-PROCESSING CARBOXYPEPTIDASE KEX1"/>
    <property type="match status" value="1"/>
</dbReference>
<dbReference type="PANTHER" id="PTHR11802">
    <property type="entry name" value="SERINE PROTEASE FAMILY S10 SERINE CARBOXYPEPTIDASE"/>
    <property type="match status" value="1"/>
</dbReference>
<dbReference type="Pfam" id="PF00450">
    <property type="entry name" value="Peptidase_S10"/>
    <property type="match status" value="1"/>
</dbReference>
<dbReference type="PRINTS" id="PR00724">
    <property type="entry name" value="CRBOXYPTASEC"/>
</dbReference>
<dbReference type="SUPFAM" id="SSF53474">
    <property type="entry name" value="alpha/beta-Hydrolases"/>
    <property type="match status" value="1"/>
</dbReference>
<dbReference type="PROSITE" id="PS00560">
    <property type="entry name" value="CARBOXYPEPT_SER_HIS"/>
    <property type="match status" value="1"/>
</dbReference>
<dbReference type="PROSITE" id="PS00131">
    <property type="entry name" value="CARBOXYPEPT_SER_SER"/>
    <property type="match status" value="1"/>
</dbReference>
<keyword id="KW-0053">Apoptosis</keyword>
<keyword id="KW-0121">Carboxypeptidase</keyword>
<keyword id="KW-0325">Glycoprotein</keyword>
<keyword id="KW-0333">Golgi apparatus</keyword>
<keyword id="KW-0378">Hydrolase</keyword>
<keyword id="KW-0472">Membrane</keyword>
<keyword id="KW-0645">Protease</keyword>
<keyword id="KW-1185">Reference proteome</keyword>
<keyword id="KW-0732">Signal</keyword>
<keyword id="KW-0812">Transmembrane</keyword>
<keyword id="KW-1133">Transmembrane helix</keyword>
<comment type="function">
    <text evidence="1">Protease with a carboxypeptidase B-like function involved in the C-terminal processing of the lysine and arginine residues from protein precursors. Promotes cell fusion and is involved in the programmed cell death (By similarity).</text>
</comment>
<comment type="catalytic activity">
    <reaction>
        <text>Preferential release of a C-terminal arginine or lysine residue.</text>
        <dbReference type="EC" id="3.4.16.6"/>
    </reaction>
</comment>
<comment type="subcellular location">
    <subcellularLocation>
        <location evidence="1">Golgi apparatus</location>
        <location evidence="1">trans-Golgi network membrane</location>
        <topology evidence="1">Single-pass type I membrane protein</topology>
    </subcellularLocation>
</comment>
<comment type="similarity">
    <text evidence="4">Belongs to the peptidase S10 family.</text>
</comment>
<reference key="1">
    <citation type="journal article" date="2004" name="Nature">
        <title>Genome evolution in yeasts.</title>
        <authorList>
            <person name="Dujon B."/>
            <person name="Sherman D."/>
            <person name="Fischer G."/>
            <person name="Durrens P."/>
            <person name="Casaregola S."/>
            <person name="Lafontaine I."/>
            <person name="de Montigny J."/>
            <person name="Marck C."/>
            <person name="Neuveglise C."/>
            <person name="Talla E."/>
            <person name="Goffard N."/>
            <person name="Frangeul L."/>
            <person name="Aigle M."/>
            <person name="Anthouard V."/>
            <person name="Babour A."/>
            <person name="Barbe V."/>
            <person name="Barnay S."/>
            <person name="Blanchin S."/>
            <person name="Beckerich J.-M."/>
            <person name="Beyne E."/>
            <person name="Bleykasten C."/>
            <person name="Boisrame A."/>
            <person name="Boyer J."/>
            <person name="Cattolico L."/>
            <person name="Confanioleri F."/>
            <person name="de Daruvar A."/>
            <person name="Despons L."/>
            <person name="Fabre E."/>
            <person name="Fairhead C."/>
            <person name="Ferry-Dumazet H."/>
            <person name="Groppi A."/>
            <person name="Hantraye F."/>
            <person name="Hennequin C."/>
            <person name="Jauniaux N."/>
            <person name="Joyet P."/>
            <person name="Kachouri R."/>
            <person name="Kerrest A."/>
            <person name="Koszul R."/>
            <person name="Lemaire M."/>
            <person name="Lesur I."/>
            <person name="Ma L."/>
            <person name="Muller H."/>
            <person name="Nicaud J.-M."/>
            <person name="Nikolski M."/>
            <person name="Oztas S."/>
            <person name="Ozier-Kalogeropoulos O."/>
            <person name="Pellenz S."/>
            <person name="Potier S."/>
            <person name="Richard G.-F."/>
            <person name="Straub M.-L."/>
            <person name="Suleau A."/>
            <person name="Swennen D."/>
            <person name="Tekaia F."/>
            <person name="Wesolowski-Louvel M."/>
            <person name="Westhof E."/>
            <person name="Wirth B."/>
            <person name="Zeniou-Meyer M."/>
            <person name="Zivanovic Y."/>
            <person name="Bolotin-Fukuhara M."/>
            <person name="Thierry A."/>
            <person name="Bouchier C."/>
            <person name="Caudron B."/>
            <person name="Scarpelli C."/>
            <person name="Gaillardin C."/>
            <person name="Weissenbach J."/>
            <person name="Wincker P."/>
            <person name="Souciet J.-L."/>
        </authorList>
    </citation>
    <scope>NUCLEOTIDE SEQUENCE [LARGE SCALE GENOMIC DNA]</scope>
    <source>
        <strain>ATCC 8585 / CBS 2359 / DSM 70799 / NBRC 1267 / NRRL Y-1140 / WM37</strain>
    </source>
</reference>
<gene>
    <name type="primary">KEX1</name>
    <name type="ordered locus">KLLA0F09999g</name>
</gene>
<protein>
    <recommendedName>
        <fullName>Pheromone-processing carboxypeptidase KEX1</fullName>
        <ecNumber>3.4.16.6</ecNumber>
    </recommendedName>
    <alternativeName>
        <fullName>Carboxypeptidase D</fullName>
    </alternativeName>
</protein>
<evidence type="ECO:0000250" key="1"/>
<evidence type="ECO:0000255" key="2"/>
<evidence type="ECO:0000256" key="3">
    <source>
        <dbReference type="SAM" id="MobiDB-lite"/>
    </source>
</evidence>
<evidence type="ECO:0000305" key="4"/>
<accession>Q6CKK4</accession>
<name>KEX1_KLULA</name>
<feature type="signal peptide" evidence="2">
    <location>
        <begin position="1"/>
        <end position="19"/>
    </location>
</feature>
<feature type="chain" id="PRO_0000411921" description="Pheromone-processing carboxypeptidase KEX1">
    <location>
        <begin position="20"/>
        <end position="642"/>
    </location>
</feature>
<feature type="topological domain" description="Lumenal" evidence="2">
    <location>
        <begin position="20"/>
        <end position="544"/>
    </location>
</feature>
<feature type="transmembrane region" description="Helical" evidence="2">
    <location>
        <begin position="545"/>
        <end position="565"/>
    </location>
</feature>
<feature type="topological domain" description="Cytoplasmic" evidence="2">
    <location>
        <begin position="566"/>
        <end position="642"/>
    </location>
</feature>
<feature type="region of interest" description="Disordered" evidence="3">
    <location>
        <begin position="515"/>
        <end position="539"/>
    </location>
</feature>
<feature type="region of interest" description="Disordered" evidence="3">
    <location>
        <begin position="609"/>
        <end position="642"/>
    </location>
</feature>
<feature type="compositionally biased region" description="Acidic residues" evidence="3">
    <location>
        <begin position="519"/>
        <end position="532"/>
    </location>
</feature>
<feature type="compositionally biased region" description="Acidic residues" evidence="3">
    <location>
        <begin position="632"/>
        <end position="642"/>
    </location>
</feature>
<feature type="active site" evidence="1">
    <location>
        <position position="189"/>
    </location>
</feature>
<feature type="active site" evidence="1">
    <location>
        <position position="406"/>
    </location>
</feature>
<feature type="active site" evidence="1">
    <location>
        <position position="470"/>
    </location>
</feature>
<feature type="glycosylation site" description="N-linked (GlcNAc...) asparagine" evidence="2">
    <location>
        <position position="80"/>
    </location>
</feature>
<feature type="glycosylation site" description="N-linked (GlcNAc...) asparagine" evidence="2">
    <location>
        <position position="425"/>
    </location>
</feature>
<feature type="glycosylation site" description="N-linked (GlcNAc...) asparagine" evidence="2">
    <location>
        <position position="459"/>
    </location>
</feature>
<feature type="glycosylation site" description="N-linked (GlcNAc...) asparagine" evidence="2">
    <location>
        <position position="467"/>
    </location>
</feature>
<proteinExistence type="inferred from homology"/>
<sequence length="642" mass="72916">MSLWLFFVQTVLLIQCALGGLPNAKDYLVAPDLLPGLNDVKDKELIPEMHAGHIPLDDGDDDDDDDEKNYFFWKFHDLANQTSVVASKTLIIWLNGGPGCSSLDGALMESGALRIDDDGEAYLNPGSWHTRGDIVFVDQPAGTGFSTVGDSKYDKDLNQVSKHFMKFLKNYFKIFPDDLDKDLVLAGESYAGQYIPFFANEILKFNSKLDKDDNEEESRSGKKYNLKSLLIGNGWIDPDQQSLSYIPFALENNLISTKADYFPDLLNMHSRCQNLVNNNGGKKFSFDECEDILTKILYYTRRKTDENGNKVPSNQECTNIYDFRLFDSYPACGSNWPDDLPSVSKFLGKPGVMDSLHLDVDKVPHWRECDSKVSSHLKNKNTQPSIHLLPNLLKHMQIFLFNGDKDIICNSRGVQDLIKNMKWNNHTGFTNDAEYYDWQYYDQFTDDTISAGFVKHESNLTYVSVYNASHMVPYDNALISRGIMDIYLKDVELVVGKDNQDDVIISKDFVVHSDHSTGEEELSADQKQDEDENSHKDRHRNSDKFEIAVILLVVFSITGTIAYYFLRERFRKQIHAILIDPENRPPSSNKSVAWADDIENQGDDFKLSIDEAPSTADKPAKNKSGYTKVPNTDDDSFELDNL</sequence>